<keyword id="KW-0539">Nucleus</keyword>
<keyword id="KW-1185">Reference proteome</keyword>
<keyword id="KW-0678">Repressor</keyword>
<keyword id="KW-0804">Transcription</keyword>
<keyword id="KW-0805">Transcription regulation</keyword>
<dbReference type="EMBL" id="AB006700">
    <property type="protein sequence ID" value="BAB08949.1"/>
    <property type="molecule type" value="Genomic_DNA"/>
</dbReference>
<dbReference type="EMBL" id="CP002688">
    <property type="protein sequence ID" value="AED90996.1"/>
    <property type="molecule type" value="Genomic_DNA"/>
</dbReference>
<dbReference type="EMBL" id="CP002688">
    <property type="protein sequence ID" value="ANM70099.1"/>
    <property type="molecule type" value="Genomic_DNA"/>
</dbReference>
<dbReference type="EMBL" id="BT003828">
    <property type="protein sequence ID" value="AAO41880.1"/>
    <property type="molecule type" value="mRNA"/>
</dbReference>
<dbReference type="EMBL" id="BT005129">
    <property type="protein sequence ID" value="AAO50662.1"/>
    <property type="molecule type" value="mRNA"/>
</dbReference>
<dbReference type="EMBL" id="AY084326">
    <property type="protein sequence ID" value="AAM60912.1"/>
    <property type="molecule type" value="mRNA"/>
</dbReference>
<dbReference type="RefSeq" id="NP_001331734.1">
    <property type="nucleotide sequence ID" value="NM_001342874.1"/>
</dbReference>
<dbReference type="RefSeq" id="NP_196245.1">
    <property type="nucleotide sequence ID" value="NM_120710.3"/>
</dbReference>
<dbReference type="FunCoup" id="Q9FNI1">
    <property type="interactions" value="42"/>
</dbReference>
<dbReference type="IntAct" id="Q9FNI1">
    <property type="interactions" value="1"/>
</dbReference>
<dbReference type="STRING" id="3702.Q9FNI1"/>
<dbReference type="iPTMnet" id="Q9FNI1"/>
<dbReference type="PaxDb" id="3702-AT5G06270.1"/>
<dbReference type="EnsemblPlants" id="AT5G06270.1">
    <property type="protein sequence ID" value="AT5G06270.1"/>
    <property type="gene ID" value="AT5G06270"/>
</dbReference>
<dbReference type="EnsemblPlants" id="AT5G06270.2">
    <property type="protein sequence ID" value="AT5G06270.2"/>
    <property type="gene ID" value="AT5G06270"/>
</dbReference>
<dbReference type="GeneID" id="830515"/>
<dbReference type="Gramene" id="AT5G06270.1">
    <property type="protein sequence ID" value="AT5G06270.1"/>
    <property type="gene ID" value="AT5G06270"/>
</dbReference>
<dbReference type="Gramene" id="AT5G06270.2">
    <property type="protein sequence ID" value="AT5G06270.2"/>
    <property type="gene ID" value="AT5G06270"/>
</dbReference>
<dbReference type="KEGG" id="ath:AT5G06270"/>
<dbReference type="Araport" id="AT5G06270"/>
<dbReference type="TAIR" id="AT5G06270">
    <property type="gene designation" value="GIR1"/>
</dbReference>
<dbReference type="eggNOG" id="ENOG502S48P">
    <property type="taxonomic scope" value="Eukaryota"/>
</dbReference>
<dbReference type="HOGENOM" id="CLU_109567_2_1_1"/>
<dbReference type="InParanoid" id="Q9FNI1"/>
<dbReference type="OMA" id="NRRMESS"/>
<dbReference type="OrthoDB" id="1930194at2759"/>
<dbReference type="PhylomeDB" id="Q9FNI1"/>
<dbReference type="PRO" id="PR:Q9FNI1"/>
<dbReference type="Proteomes" id="UP000006548">
    <property type="component" value="Chromosome 5"/>
</dbReference>
<dbReference type="ExpressionAtlas" id="Q9FNI1">
    <property type="expression patterns" value="baseline and differential"/>
</dbReference>
<dbReference type="GO" id="GO:0005634">
    <property type="term" value="C:nucleus"/>
    <property type="evidence" value="ECO:0007669"/>
    <property type="project" value="UniProtKB-SubCell"/>
</dbReference>
<dbReference type="GO" id="GO:0045892">
    <property type="term" value="P:negative regulation of DNA-templated transcription"/>
    <property type="evidence" value="ECO:0000314"/>
    <property type="project" value="TAIR"/>
</dbReference>
<dbReference type="GO" id="GO:0080147">
    <property type="term" value="P:root hair cell development"/>
    <property type="evidence" value="ECO:0000316"/>
    <property type="project" value="TAIR"/>
</dbReference>
<dbReference type="InterPro" id="IPR055281">
    <property type="entry name" value="GIR1-2/SIED1"/>
</dbReference>
<dbReference type="InterPro" id="IPR056440">
    <property type="entry name" value="Zn-ribbon_GIR1"/>
</dbReference>
<dbReference type="PANTHER" id="PTHR33177:SF74">
    <property type="entry name" value="PROTEIN GL2-INTERACTING REPRESSOR 1"/>
    <property type="match status" value="1"/>
</dbReference>
<dbReference type="PANTHER" id="PTHR33177">
    <property type="entry name" value="PUTATIVE-RELATED"/>
    <property type="match status" value="1"/>
</dbReference>
<dbReference type="Pfam" id="PF24747">
    <property type="entry name" value="Zn-ribbon_GIR1"/>
    <property type="match status" value="1"/>
</dbReference>
<comment type="function">
    <text evidence="2 3">Acts as a negative regulator of root hair development redundantly with GIR2 (PubMed:28526410). GIR1 and GIR2 may function as adapter proteins that associate with GL2 and participate in the control of root hair formation (PubMed:28526410). GIR1 and GIR2 may function as adapter proteins that associate with TPL and participate in the repression of root gene expression (PubMed:28526412).</text>
</comment>
<comment type="subunit">
    <text evidence="2 3">Interacts with GL2 (PubMed:28526410). Interacts with TPL (PubMed:28526412).</text>
</comment>
<comment type="subcellular location">
    <subcellularLocation>
        <location evidence="2 3">Nucleus</location>
    </subcellularLocation>
</comment>
<comment type="tissue specificity">
    <text evidence="2">Expressed in root and shoot meristems.</text>
</comment>
<comment type="disruption phenotype">
    <text evidence="2">No visible phenotype under normal growth conditions, but the double mutant seedlings gir1 and gir2 exhibit excessive root hair formation.</text>
</comment>
<comment type="miscellaneous">
    <text evidence="2">Seedlings overexpressing GIR1 exhibit reduced root hair formation.</text>
</comment>
<gene>
    <name evidence="4" type="primary">GIR1</name>
    <name evidence="6" type="ordered locus">At5g06270</name>
    <name evidence="7" type="ORF">MHF15.21</name>
</gene>
<proteinExistence type="evidence at protein level"/>
<name>GIR1_ARATH</name>
<reference key="1">
    <citation type="journal article" date="1997" name="DNA Res.">
        <title>Structural analysis of Arabidopsis thaliana chromosome 5. II. Sequence features of the regions of 1,044,062 bp covered by thirteen physically assigned P1 clones.</title>
        <authorList>
            <person name="Kotani H."/>
            <person name="Nakamura Y."/>
            <person name="Sato S."/>
            <person name="Kaneko T."/>
            <person name="Asamizu E."/>
            <person name="Miyajima N."/>
            <person name="Tabata S."/>
        </authorList>
    </citation>
    <scope>NUCLEOTIDE SEQUENCE [LARGE SCALE GENOMIC DNA]</scope>
    <source>
        <strain>cv. Columbia</strain>
    </source>
</reference>
<reference key="2">
    <citation type="journal article" date="2017" name="Plant J.">
        <title>Araport11: a complete reannotation of the Arabidopsis thaliana reference genome.</title>
        <authorList>
            <person name="Cheng C.Y."/>
            <person name="Krishnakumar V."/>
            <person name="Chan A.P."/>
            <person name="Thibaud-Nissen F."/>
            <person name="Schobel S."/>
            <person name="Town C.D."/>
        </authorList>
    </citation>
    <scope>GENOME REANNOTATION</scope>
    <source>
        <strain>cv. Columbia</strain>
    </source>
</reference>
<reference key="3">
    <citation type="journal article" date="2003" name="Science">
        <title>Empirical analysis of transcriptional activity in the Arabidopsis genome.</title>
        <authorList>
            <person name="Yamada K."/>
            <person name="Lim J."/>
            <person name="Dale J.M."/>
            <person name="Chen H."/>
            <person name="Shinn P."/>
            <person name="Palm C.J."/>
            <person name="Southwick A.M."/>
            <person name="Wu H.C."/>
            <person name="Kim C.J."/>
            <person name="Nguyen M."/>
            <person name="Pham P.K."/>
            <person name="Cheuk R.F."/>
            <person name="Karlin-Newmann G."/>
            <person name="Liu S.X."/>
            <person name="Lam B."/>
            <person name="Sakano H."/>
            <person name="Wu T."/>
            <person name="Yu G."/>
            <person name="Miranda M."/>
            <person name="Quach H.L."/>
            <person name="Tripp M."/>
            <person name="Chang C.H."/>
            <person name="Lee J.M."/>
            <person name="Toriumi M.J."/>
            <person name="Chan M.M."/>
            <person name="Tang C.C."/>
            <person name="Onodera C.S."/>
            <person name="Deng J.M."/>
            <person name="Akiyama K."/>
            <person name="Ansari Y."/>
            <person name="Arakawa T."/>
            <person name="Banh J."/>
            <person name="Banno F."/>
            <person name="Bowser L."/>
            <person name="Brooks S.Y."/>
            <person name="Carninci P."/>
            <person name="Chao Q."/>
            <person name="Choy N."/>
            <person name="Enju A."/>
            <person name="Goldsmith A.D."/>
            <person name="Gurjal M."/>
            <person name="Hansen N.F."/>
            <person name="Hayashizaki Y."/>
            <person name="Johnson-Hopson C."/>
            <person name="Hsuan V.W."/>
            <person name="Iida K."/>
            <person name="Karnes M."/>
            <person name="Khan S."/>
            <person name="Koesema E."/>
            <person name="Ishida J."/>
            <person name="Jiang P.X."/>
            <person name="Jones T."/>
            <person name="Kawai J."/>
            <person name="Kamiya A."/>
            <person name="Meyers C."/>
            <person name="Nakajima M."/>
            <person name="Narusaka M."/>
            <person name="Seki M."/>
            <person name="Sakurai T."/>
            <person name="Satou M."/>
            <person name="Tamse R."/>
            <person name="Vaysberg M."/>
            <person name="Wallender E.K."/>
            <person name="Wong C."/>
            <person name="Yamamura Y."/>
            <person name="Yuan S."/>
            <person name="Shinozaki K."/>
            <person name="Davis R.W."/>
            <person name="Theologis A."/>
            <person name="Ecker J.R."/>
        </authorList>
    </citation>
    <scope>NUCLEOTIDE SEQUENCE [LARGE SCALE MRNA]</scope>
    <source>
        <strain>cv. Columbia</strain>
    </source>
</reference>
<reference key="4">
    <citation type="submission" date="2002-03" db="EMBL/GenBank/DDBJ databases">
        <title>Full-length cDNA from Arabidopsis thaliana.</title>
        <authorList>
            <person name="Brover V.V."/>
            <person name="Troukhan M.E."/>
            <person name="Alexandrov N.A."/>
            <person name="Lu Y.-P."/>
            <person name="Flavell R.B."/>
            <person name="Feldmann K.A."/>
        </authorList>
    </citation>
    <scope>NUCLEOTIDE SEQUENCE [LARGE SCALE MRNA]</scope>
</reference>
<reference key="5">
    <citation type="journal article" date="2017" name="Biochem. Biophys. Res. Commun.">
        <title>Adaptor proteins GIR1 and GIR2. I. Interaction with the repressor GLABRA2 and regulation of root hair development.</title>
        <authorList>
            <person name="Wu R."/>
            <person name="Citovsky V."/>
        </authorList>
    </citation>
    <scope>FUNCTION</scope>
    <scope>INTERACTION WITH GL2</scope>
    <scope>SUBCELLULAR LOCATION</scope>
    <scope>TISSUE SPECIFICITY</scope>
    <scope>DISRUPTION PHENOTYPE</scope>
</reference>
<reference key="6">
    <citation type="journal article" date="2017" name="Biochem. Biophys. Res. Commun.">
        <title>Adaptor proteins GIR1 and GIR2. II. Interaction with the co-repressor TOPLESS and promotion of histone deacetylation of target chromatin.</title>
        <authorList>
            <person name="Wu R."/>
            <person name="Citovsky V."/>
        </authorList>
    </citation>
    <scope>FUNCTION</scope>
    <scope>INTERACTION WITH TPL</scope>
    <scope>SUBCELLULAR LOCATION</scope>
    <scope>EAR MOTIF</scope>
    <scope>MUTAGENESIS OF LEU-8; LEU-10 AND LEU-12</scope>
</reference>
<feature type="chain" id="PRO_0000450104" description="Protein GL2-INTERACTING REPRESSOR 1">
    <location>
        <begin position="1"/>
        <end position="122"/>
    </location>
</feature>
<feature type="region of interest" description="Disordered" evidence="1">
    <location>
        <begin position="1"/>
        <end position="62"/>
    </location>
</feature>
<feature type="short sequence motif" description="EAR" evidence="5">
    <location>
        <begin position="7"/>
        <end position="12"/>
    </location>
</feature>
<feature type="compositionally biased region" description="Basic and acidic residues" evidence="1">
    <location>
        <begin position="1"/>
        <end position="10"/>
    </location>
</feature>
<feature type="compositionally biased region" description="Low complexity" evidence="1">
    <location>
        <begin position="27"/>
        <end position="46"/>
    </location>
</feature>
<feature type="compositionally biased region" description="Polar residues" evidence="1">
    <location>
        <begin position="47"/>
        <end position="62"/>
    </location>
</feature>
<feature type="mutagenesis site" description="Abolishes repressor activity and interaction with TPL; when associated with S-10 and S-12.">
    <original>L</original>
    <variation>S</variation>
    <location>
        <position position="8"/>
    </location>
</feature>
<feature type="mutagenesis site" description="Abolishes repressor activity and interaction with TPL; when associated with S-8 and S-12.">
    <original>L</original>
    <variation>S</variation>
    <location>
        <position position="10"/>
    </location>
</feature>
<feature type="mutagenesis site" description="Abolishes repressor activity and interaction with TPL; when associated with S-8 and S-10.">
    <original>L</original>
    <variation>S</variation>
    <location>
        <position position="12"/>
    </location>
</feature>
<evidence type="ECO:0000256" key="1">
    <source>
        <dbReference type="SAM" id="MobiDB-lite"/>
    </source>
</evidence>
<evidence type="ECO:0000269" key="2">
    <source>
    </source>
</evidence>
<evidence type="ECO:0000269" key="3">
    <source>
    </source>
</evidence>
<evidence type="ECO:0000303" key="4">
    <source>
    </source>
</evidence>
<evidence type="ECO:0000305" key="5">
    <source>
    </source>
</evidence>
<evidence type="ECO:0000312" key="6">
    <source>
        <dbReference type="Araport" id="AT5G06270"/>
    </source>
</evidence>
<evidence type="ECO:0000312" key="7">
    <source>
        <dbReference type="EMBL" id="BAB08949.1"/>
    </source>
</evidence>
<sequence>MSRRSPKLELKLNLSPPTSSQRRMVRSPSRSATTSPTSPPSSCVSSEMNQDEPSVRYSTSPETTSMVLVGCPRCLMYVMLSEDDPKCPKCKSTVLLDFLHENATNANANAAAASSGRKTRRN</sequence>
<organism>
    <name type="scientific">Arabidopsis thaliana</name>
    <name type="common">Mouse-ear cress</name>
    <dbReference type="NCBI Taxonomy" id="3702"/>
    <lineage>
        <taxon>Eukaryota</taxon>
        <taxon>Viridiplantae</taxon>
        <taxon>Streptophyta</taxon>
        <taxon>Embryophyta</taxon>
        <taxon>Tracheophyta</taxon>
        <taxon>Spermatophyta</taxon>
        <taxon>Magnoliopsida</taxon>
        <taxon>eudicotyledons</taxon>
        <taxon>Gunneridae</taxon>
        <taxon>Pentapetalae</taxon>
        <taxon>rosids</taxon>
        <taxon>malvids</taxon>
        <taxon>Brassicales</taxon>
        <taxon>Brassicaceae</taxon>
        <taxon>Camelineae</taxon>
        <taxon>Arabidopsis</taxon>
    </lineage>
</organism>
<protein>
    <recommendedName>
        <fullName evidence="4">Protein GL2-INTERACTING REPRESSOR 1</fullName>
    </recommendedName>
</protein>
<accession>Q9FNI1</accession>
<accession>A0A178UDX1</accession>